<organism>
    <name type="scientific">Bacillus pumilus (strain SAFR-032)</name>
    <dbReference type="NCBI Taxonomy" id="315750"/>
    <lineage>
        <taxon>Bacteria</taxon>
        <taxon>Bacillati</taxon>
        <taxon>Bacillota</taxon>
        <taxon>Bacilli</taxon>
        <taxon>Bacillales</taxon>
        <taxon>Bacillaceae</taxon>
        <taxon>Bacillus</taxon>
    </lineage>
</organism>
<feature type="chain" id="PRO_1000062118" description="Ribosomal protein L11 methyltransferase">
    <location>
        <begin position="1"/>
        <end position="311"/>
    </location>
</feature>
<feature type="binding site" evidence="1">
    <location>
        <position position="162"/>
    </location>
    <ligand>
        <name>S-adenosyl-L-methionine</name>
        <dbReference type="ChEBI" id="CHEBI:59789"/>
    </ligand>
</feature>
<feature type="binding site" evidence="1">
    <location>
        <position position="183"/>
    </location>
    <ligand>
        <name>S-adenosyl-L-methionine</name>
        <dbReference type="ChEBI" id="CHEBI:59789"/>
    </ligand>
</feature>
<feature type="binding site" evidence="1">
    <location>
        <position position="205"/>
    </location>
    <ligand>
        <name>S-adenosyl-L-methionine</name>
        <dbReference type="ChEBI" id="CHEBI:59789"/>
    </ligand>
</feature>
<feature type="binding site" evidence="1">
    <location>
        <position position="248"/>
    </location>
    <ligand>
        <name>S-adenosyl-L-methionine</name>
        <dbReference type="ChEBI" id="CHEBI:59789"/>
    </ligand>
</feature>
<sequence length="311" mass="34568">MKWSEISVHTTNEAVEPITNILHEAGASGVVIEDPLDLVKERENVYGEIYQLDPNDYPEEGVIVKAYLPMNSFLMETVDEIKEAINNLLLYDIDLGRNTLSICEVNEEEWATAWKKYYHPVKISEKFTIVPTWEEYTPVHSDELIIEMDPGMAFGTGTHPTTVLCIQALERYVKENDTVIDVGTGSGILSVAAAMVGAKDIQAFDLDTVAVESAKQNIELNGVSEQVTVKQNNLLDGISGEHDVIVANILAEVILRFTDQAYDLLKKDGYFITSGIIGQKKLQVKTALEEAGFDIVEVLSMEDWVSIIAKK</sequence>
<protein>
    <recommendedName>
        <fullName evidence="1">Ribosomal protein L11 methyltransferase</fullName>
        <shortName evidence="1">L11 Mtase</shortName>
        <ecNumber evidence="1">2.1.1.-</ecNumber>
    </recommendedName>
</protein>
<keyword id="KW-0963">Cytoplasm</keyword>
<keyword id="KW-0489">Methyltransferase</keyword>
<keyword id="KW-0949">S-adenosyl-L-methionine</keyword>
<keyword id="KW-0808">Transferase</keyword>
<accession>A8FFD0</accession>
<gene>
    <name evidence="1" type="primary">prmA</name>
    <name type="ordered locus">BPUM_2278</name>
</gene>
<dbReference type="EC" id="2.1.1.-" evidence="1"/>
<dbReference type="EMBL" id="CP000813">
    <property type="protein sequence ID" value="ABV62947.1"/>
    <property type="molecule type" value="Genomic_DNA"/>
</dbReference>
<dbReference type="RefSeq" id="WP_012010627.1">
    <property type="nucleotide sequence ID" value="NZ_VEIS01000005.1"/>
</dbReference>
<dbReference type="SMR" id="A8FFD0"/>
<dbReference type="STRING" id="315750.BPUM_2278"/>
<dbReference type="GeneID" id="5621544"/>
<dbReference type="KEGG" id="bpu:BPUM_2278"/>
<dbReference type="eggNOG" id="COG2264">
    <property type="taxonomic scope" value="Bacteria"/>
</dbReference>
<dbReference type="HOGENOM" id="CLU_049382_0_1_9"/>
<dbReference type="OrthoDB" id="9785995at2"/>
<dbReference type="Proteomes" id="UP000001355">
    <property type="component" value="Chromosome"/>
</dbReference>
<dbReference type="GO" id="GO:0005737">
    <property type="term" value="C:cytoplasm"/>
    <property type="evidence" value="ECO:0007669"/>
    <property type="project" value="UniProtKB-SubCell"/>
</dbReference>
<dbReference type="GO" id="GO:0016279">
    <property type="term" value="F:protein-lysine N-methyltransferase activity"/>
    <property type="evidence" value="ECO:0007669"/>
    <property type="project" value="RHEA"/>
</dbReference>
<dbReference type="GO" id="GO:0032259">
    <property type="term" value="P:methylation"/>
    <property type="evidence" value="ECO:0007669"/>
    <property type="project" value="UniProtKB-KW"/>
</dbReference>
<dbReference type="CDD" id="cd02440">
    <property type="entry name" value="AdoMet_MTases"/>
    <property type="match status" value="1"/>
</dbReference>
<dbReference type="Gene3D" id="3.40.50.150">
    <property type="entry name" value="Vaccinia Virus protein VP39"/>
    <property type="match status" value="1"/>
</dbReference>
<dbReference type="HAMAP" id="MF_00735">
    <property type="entry name" value="Methyltr_PrmA"/>
    <property type="match status" value="1"/>
</dbReference>
<dbReference type="InterPro" id="IPR050078">
    <property type="entry name" value="Ribosomal_L11_MeTrfase_PrmA"/>
</dbReference>
<dbReference type="InterPro" id="IPR004498">
    <property type="entry name" value="Ribosomal_PrmA_MeTrfase"/>
</dbReference>
<dbReference type="InterPro" id="IPR029063">
    <property type="entry name" value="SAM-dependent_MTases_sf"/>
</dbReference>
<dbReference type="NCBIfam" id="TIGR00406">
    <property type="entry name" value="prmA"/>
    <property type="match status" value="1"/>
</dbReference>
<dbReference type="PANTHER" id="PTHR43648">
    <property type="entry name" value="ELECTRON TRANSFER FLAVOPROTEIN BETA SUBUNIT LYSINE METHYLTRANSFERASE"/>
    <property type="match status" value="1"/>
</dbReference>
<dbReference type="PANTHER" id="PTHR43648:SF1">
    <property type="entry name" value="ELECTRON TRANSFER FLAVOPROTEIN BETA SUBUNIT LYSINE METHYLTRANSFERASE"/>
    <property type="match status" value="1"/>
</dbReference>
<dbReference type="Pfam" id="PF06325">
    <property type="entry name" value="PrmA"/>
    <property type="match status" value="1"/>
</dbReference>
<dbReference type="PIRSF" id="PIRSF000401">
    <property type="entry name" value="RPL11_MTase"/>
    <property type="match status" value="1"/>
</dbReference>
<dbReference type="SUPFAM" id="SSF53335">
    <property type="entry name" value="S-adenosyl-L-methionine-dependent methyltransferases"/>
    <property type="match status" value="1"/>
</dbReference>
<name>PRMA_BACP2</name>
<proteinExistence type="inferred from homology"/>
<comment type="function">
    <text evidence="1">Methylates ribosomal protein L11.</text>
</comment>
<comment type="catalytic activity">
    <reaction evidence="1">
        <text>L-lysyl-[protein] + 3 S-adenosyl-L-methionine = N(6),N(6),N(6)-trimethyl-L-lysyl-[protein] + 3 S-adenosyl-L-homocysteine + 3 H(+)</text>
        <dbReference type="Rhea" id="RHEA:54192"/>
        <dbReference type="Rhea" id="RHEA-COMP:9752"/>
        <dbReference type="Rhea" id="RHEA-COMP:13826"/>
        <dbReference type="ChEBI" id="CHEBI:15378"/>
        <dbReference type="ChEBI" id="CHEBI:29969"/>
        <dbReference type="ChEBI" id="CHEBI:57856"/>
        <dbReference type="ChEBI" id="CHEBI:59789"/>
        <dbReference type="ChEBI" id="CHEBI:61961"/>
    </reaction>
</comment>
<comment type="subcellular location">
    <subcellularLocation>
        <location evidence="1">Cytoplasm</location>
    </subcellularLocation>
</comment>
<comment type="similarity">
    <text evidence="1">Belongs to the methyltransferase superfamily. PrmA family.</text>
</comment>
<evidence type="ECO:0000255" key="1">
    <source>
        <dbReference type="HAMAP-Rule" id="MF_00735"/>
    </source>
</evidence>
<reference key="1">
    <citation type="journal article" date="2007" name="PLoS ONE">
        <title>Paradoxical DNA repair and peroxide resistance gene conservation in Bacillus pumilus SAFR-032.</title>
        <authorList>
            <person name="Gioia J."/>
            <person name="Yerrapragada S."/>
            <person name="Qin X."/>
            <person name="Jiang H."/>
            <person name="Igboeli O.C."/>
            <person name="Muzny D."/>
            <person name="Dugan-Rocha S."/>
            <person name="Ding Y."/>
            <person name="Hawes A."/>
            <person name="Liu W."/>
            <person name="Perez L."/>
            <person name="Kovar C."/>
            <person name="Dinh H."/>
            <person name="Lee S."/>
            <person name="Nazareth L."/>
            <person name="Blyth P."/>
            <person name="Holder M."/>
            <person name="Buhay C."/>
            <person name="Tirumalai M.R."/>
            <person name="Liu Y."/>
            <person name="Dasgupta I."/>
            <person name="Bokhetache L."/>
            <person name="Fujita M."/>
            <person name="Karouia F."/>
            <person name="Eswara Moorthy P."/>
            <person name="Siefert J."/>
            <person name="Uzman A."/>
            <person name="Buzumbo P."/>
            <person name="Verma A."/>
            <person name="Zwiya H."/>
            <person name="McWilliams B.D."/>
            <person name="Olowu A."/>
            <person name="Clinkenbeard K.D."/>
            <person name="Newcombe D."/>
            <person name="Golebiewski L."/>
            <person name="Petrosino J.F."/>
            <person name="Nicholson W.L."/>
            <person name="Fox G.E."/>
            <person name="Venkateswaran K."/>
            <person name="Highlander S.K."/>
            <person name="Weinstock G.M."/>
        </authorList>
    </citation>
    <scope>NUCLEOTIDE SEQUENCE [LARGE SCALE GENOMIC DNA]</scope>
    <source>
        <strain>SAFR-032</strain>
    </source>
</reference>